<sequence length="665" mass="71612">MSSRKQLANAIRALSMDGVQKANSGHPGAPMGMADIAEVLWRSHLNHNPQNPNWADRDRFVLSNGHGSMLIYSLLHLSGYELSIDDLKNFRQLHSKTPGHPEYGYAPGIETTTGPLGQGITNAVGMAIAEKALAAQFNKPGHDIVDHFTYVFMGDGCLMEGISHEACSLAGTLGLGKLIAFWDDNGISIDGHVEGWFSDDTPKRFEAYGWHVIPAVDGHDADAINAAIEAAKAETSRPTLICTKTIIGFGSPNKAGSHDCHGAPLGNDEIKAAREFLGWEHAPFEIPADIYAAWDAKQAGASKEAAWNEKFAAYAKAYPAEAAEYKRRVAGELPANWEAATSEIIANLQANPANIASRKASQNALEAFGKLLPEFMGGSADLAPSNLTMWSGSKSLTAEDASGNYIHYGVREFGMTAIINGIALHGGFVPYGATFLMFMEYARNAMRMAALMKVQNIQVYTHDSIGLGEDGPTHQPVEQIASLRMTPNMSTWRPCDQVESAVAWKLAIERKDAPSALIFSRQNLAQQPRSAEQVANIAKGGYILKDCAGQPELILIATGSEVELAVAAYEQLSAEGKAVRVVSMPSTDAFDKQDAAYREAVLPAAVTKRIAIEAGIADFWYKYVGFGGRIIGMTSFGESAPAGELFKLFGFTTENVVKQAKELLA</sequence>
<keyword id="KW-0106">Calcium</keyword>
<keyword id="KW-0460">Magnesium</keyword>
<keyword id="KW-0479">Metal-binding</keyword>
<keyword id="KW-1185">Reference proteome</keyword>
<keyword id="KW-0786">Thiamine pyrophosphate</keyword>
<keyword id="KW-0808">Transferase</keyword>
<dbReference type="EC" id="2.2.1.1"/>
<dbReference type="EMBL" id="AE003852">
    <property type="protein sequence ID" value="AAF93646.1"/>
    <property type="status" value="ALT_INIT"/>
    <property type="molecule type" value="Genomic_DNA"/>
</dbReference>
<dbReference type="PIR" id="F82319">
    <property type="entry name" value="F82319"/>
</dbReference>
<dbReference type="RefSeq" id="NP_230127.1">
    <property type="nucleotide sequence ID" value="NC_002505.1"/>
</dbReference>
<dbReference type="SMR" id="Q9KUP2"/>
<dbReference type="STRING" id="243277.VC_0473"/>
<dbReference type="DNASU" id="2615135"/>
<dbReference type="EnsemblBacteria" id="AAF93646">
    <property type="protein sequence ID" value="AAF93646"/>
    <property type="gene ID" value="VC_0473"/>
</dbReference>
<dbReference type="KEGG" id="vch:VC_0473"/>
<dbReference type="PATRIC" id="fig|243277.26.peg.447"/>
<dbReference type="eggNOG" id="COG0021">
    <property type="taxonomic scope" value="Bacteria"/>
</dbReference>
<dbReference type="HOGENOM" id="CLU_009227_0_0_6"/>
<dbReference type="Proteomes" id="UP000000584">
    <property type="component" value="Chromosome 1"/>
</dbReference>
<dbReference type="GO" id="GO:0005829">
    <property type="term" value="C:cytosol"/>
    <property type="evidence" value="ECO:0000318"/>
    <property type="project" value="GO_Central"/>
</dbReference>
<dbReference type="GO" id="GO:0046872">
    <property type="term" value="F:metal ion binding"/>
    <property type="evidence" value="ECO:0007669"/>
    <property type="project" value="UniProtKB-KW"/>
</dbReference>
<dbReference type="GO" id="GO:0004802">
    <property type="term" value="F:transketolase activity"/>
    <property type="evidence" value="ECO:0000318"/>
    <property type="project" value="GO_Central"/>
</dbReference>
<dbReference type="GO" id="GO:0006098">
    <property type="term" value="P:pentose-phosphate shunt"/>
    <property type="evidence" value="ECO:0000318"/>
    <property type="project" value="GO_Central"/>
</dbReference>
<dbReference type="CDD" id="cd07033">
    <property type="entry name" value="TPP_PYR_DXS_TK_like"/>
    <property type="match status" value="1"/>
</dbReference>
<dbReference type="CDD" id="cd02012">
    <property type="entry name" value="TPP_TK"/>
    <property type="match status" value="1"/>
</dbReference>
<dbReference type="FunFam" id="3.40.50.920:FF:000003">
    <property type="entry name" value="Transketolase"/>
    <property type="match status" value="1"/>
</dbReference>
<dbReference type="FunFam" id="3.40.50.970:FF:000003">
    <property type="entry name" value="Transketolase"/>
    <property type="match status" value="1"/>
</dbReference>
<dbReference type="FunFam" id="3.40.50.970:FF:000004">
    <property type="entry name" value="Transketolase"/>
    <property type="match status" value="1"/>
</dbReference>
<dbReference type="Gene3D" id="3.40.50.920">
    <property type="match status" value="1"/>
</dbReference>
<dbReference type="Gene3D" id="3.40.50.970">
    <property type="match status" value="2"/>
</dbReference>
<dbReference type="InterPro" id="IPR029061">
    <property type="entry name" value="THDP-binding"/>
</dbReference>
<dbReference type="InterPro" id="IPR009014">
    <property type="entry name" value="Transketo_C/PFOR_II"/>
</dbReference>
<dbReference type="InterPro" id="IPR055152">
    <property type="entry name" value="Transketolase-like_C_2"/>
</dbReference>
<dbReference type="InterPro" id="IPR005475">
    <property type="entry name" value="Transketolase-like_Pyr-bd"/>
</dbReference>
<dbReference type="InterPro" id="IPR005478">
    <property type="entry name" value="Transketolase_bac-like"/>
</dbReference>
<dbReference type="InterPro" id="IPR020826">
    <property type="entry name" value="Transketolase_BS"/>
</dbReference>
<dbReference type="InterPro" id="IPR049557">
    <property type="entry name" value="Transketolase_CS"/>
</dbReference>
<dbReference type="InterPro" id="IPR033247">
    <property type="entry name" value="Transketolase_fam"/>
</dbReference>
<dbReference type="InterPro" id="IPR005474">
    <property type="entry name" value="Transketolase_N"/>
</dbReference>
<dbReference type="NCBIfam" id="TIGR00232">
    <property type="entry name" value="tktlase_bact"/>
    <property type="match status" value="1"/>
</dbReference>
<dbReference type="PANTHER" id="PTHR43522">
    <property type="entry name" value="TRANSKETOLASE"/>
    <property type="match status" value="1"/>
</dbReference>
<dbReference type="PANTHER" id="PTHR43522:SF2">
    <property type="entry name" value="TRANSKETOLASE 1-RELATED"/>
    <property type="match status" value="1"/>
</dbReference>
<dbReference type="Pfam" id="PF02779">
    <property type="entry name" value="Transket_pyr"/>
    <property type="match status" value="1"/>
</dbReference>
<dbReference type="Pfam" id="PF22613">
    <property type="entry name" value="Transketolase_C_1"/>
    <property type="match status" value="1"/>
</dbReference>
<dbReference type="Pfam" id="PF00456">
    <property type="entry name" value="Transketolase_N"/>
    <property type="match status" value="1"/>
</dbReference>
<dbReference type="SMART" id="SM00861">
    <property type="entry name" value="Transket_pyr"/>
    <property type="match status" value="1"/>
</dbReference>
<dbReference type="SUPFAM" id="SSF52518">
    <property type="entry name" value="Thiamin diphosphate-binding fold (THDP-binding)"/>
    <property type="match status" value="2"/>
</dbReference>
<dbReference type="SUPFAM" id="SSF52922">
    <property type="entry name" value="TK C-terminal domain-like"/>
    <property type="match status" value="1"/>
</dbReference>
<dbReference type="PROSITE" id="PS00801">
    <property type="entry name" value="TRANSKETOLASE_1"/>
    <property type="match status" value="1"/>
</dbReference>
<dbReference type="PROSITE" id="PS00802">
    <property type="entry name" value="TRANSKETOLASE_2"/>
    <property type="match status" value="1"/>
</dbReference>
<name>TKT1_VIBCH</name>
<reference key="1">
    <citation type="journal article" date="2000" name="Nature">
        <title>DNA sequence of both chromosomes of the cholera pathogen Vibrio cholerae.</title>
        <authorList>
            <person name="Heidelberg J.F."/>
            <person name="Eisen J.A."/>
            <person name="Nelson W.C."/>
            <person name="Clayton R.A."/>
            <person name="Gwinn M.L."/>
            <person name="Dodson R.J."/>
            <person name="Haft D.H."/>
            <person name="Hickey E.K."/>
            <person name="Peterson J.D."/>
            <person name="Umayam L.A."/>
            <person name="Gill S.R."/>
            <person name="Nelson K.E."/>
            <person name="Read T.D."/>
            <person name="Tettelin H."/>
            <person name="Richardson D.L."/>
            <person name="Ermolaeva M.D."/>
            <person name="Vamathevan J.J."/>
            <person name="Bass S."/>
            <person name="Qin H."/>
            <person name="Dragoi I."/>
            <person name="Sellers P."/>
            <person name="McDonald L.A."/>
            <person name="Utterback T.R."/>
            <person name="Fleischmann R.D."/>
            <person name="Nierman W.C."/>
            <person name="White O."/>
            <person name="Salzberg S.L."/>
            <person name="Smith H.O."/>
            <person name="Colwell R.R."/>
            <person name="Mekalanos J.J."/>
            <person name="Venter J.C."/>
            <person name="Fraser C.M."/>
        </authorList>
    </citation>
    <scope>NUCLEOTIDE SEQUENCE [LARGE SCALE GENOMIC DNA]</scope>
    <source>
        <strain>ATCC 39315 / El Tor Inaba N16961</strain>
    </source>
</reference>
<protein>
    <recommendedName>
        <fullName>Transketolase 1</fullName>
        <shortName>TK 1</shortName>
        <ecNumber>2.2.1.1</ecNumber>
    </recommendedName>
</protein>
<feature type="chain" id="PRO_0000191880" description="Transketolase 1">
    <location>
        <begin position="1"/>
        <end position="665"/>
    </location>
</feature>
<feature type="active site" description="Proton donor" evidence="1">
    <location>
        <position position="412"/>
    </location>
</feature>
<feature type="binding site" evidence="1">
    <location>
        <position position="26"/>
    </location>
    <ligand>
        <name>substrate</name>
    </ligand>
</feature>
<feature type="binding site" evidence="1">
    <location>
        <position position="66"/>
    </location>
    <ligand>
        <name>thiamine diphosphate</name>
        <dbReference type="ChEBI" id="CHEBI:58937"/>
    </ligand>
</feature>
<feature type="binding site" evidence="1">
    <location>
        <begin position="114"/>
        <end position="116"/>
    </location>
    <ligand>
        <name>thiamine diphosphate</name>
        <dbReference type="ChEBI" id="CHEBI:58937"/>
    </ligand>
</feature>
<feature type="binding site" evidence="1">
    <location>
        <position position="155"/>
    </location>
    <ligand>
        <name>Mg(2+)</name>
        <dbReference type="ChEBI" id="CHEBI:18420"/>
    </ligand>
</feature>
<feature type="binding site" evidence="1">
    <location>
        <position position="156"/>
    </location>
    <ligand>
        <name>thiamine diphosphate</name>
        <dbReference type="ChEBI" id="CHEBI:58937"/>
    </ligand>
</feature>
<feature type="binding site" evidence="1">
    <location>
        <position position="185"/>
    </location>
    <ligand>
        <name>Mg(2+)</name>
        <dbReference type="ChEBI" id="CHEBI:18420"/>
    </ligand>
</feature>
<feature type="binding site" evidence="1">
    <location>
        <position position="185"/>
    </location>
    <ligand>
        <name>thiamine diphosphate</name>
        <dbReference type="ChEBI" id="CHEBI:58937"/>
    </ligand>
</feature>
<feature type="binding site" evidence="1">
    <location>
        <position position="187"/>
    </location>
    <ligand>
        <name>Mg(2+)</name>
        <dbReference type="ChEBI" id="CHEBI:18420"/>
    </ligand>
</feature>
<feature type="binding site" evidence="1">
    <location>
        <position position="261"/>
    </location>
    <ligand>
        <name>substrate</name>
    </ligand>
</feature>
<feature type="binding site" evidence="1">
    <location>
        <position position="261"/>
    </location>
    <ligand>
        <name>thiamine diphosphate</name>
        <dbReference type="ChEBI" id="CHEBI:58937"/>
    </ligand>
</feature>
<feature type="binding site" evidence="1">
    <location>
        <position position="358"/>
    </location>
    <ligand>
        <name>substrate</name>
    </ligand>
</feature>
<feature type="binding site" evidence="1">
    <location>
        <position position="385"/>
    </location>
    <ligand>
        <name>substrate</name>
    </ligand>
</feature>
<feature type="binding site" evidence="1">
    <location>
        <position position="438"/>
    </location>
    <ligand>
        <name>thiamine diphosphate</name>
        <dbReference type="ChEBI" id="CHEBI:58937"/>
    </ligand>
</feature>
<feature type="binding site" evidence="1">
    <location>
        <position position="462"/>
    </location>
    <ligand>
        <name>substrate</name>
    </ligand>
</feature>
<feature type="binding site" evidence="1">
    <location>
        <position position="470"/>
    </location>
    <ligand>
        <name>substrate</name>
    </ligand>
</feature>
<feature type="binding site" evidence="1">
    <location>
        <position position="521"/>
    </location>
    <ligand>
        <name>substrate</name>
    </ligand>
</feature>
<feature type="site" description="Important for catalytic activity" evidence="1">
    <location>
        <position position="26"/>
    </location>
</feature>
<feature type="site" description="Important for catalytic activity" evidence="1">
    <location>
        <position position="261"/>
    </location>
</feature>
<proteinExistence type="inferred from homology"/>
<organism>
    <name type="scientific">Vibrio cholerae serotype O1 (strain ATCC 39315 / El Tor Inaba N16961)</name>
    <dbReference type="NCBI Taxonomy" id="243277"/>
    <lineage>
        <taxon>Bacteria</taxon>
        <taxon>Pseudomonadati</taxon>
        <taxon>Pseudomonadota</taxon>
        <taxon>Gammaproteobacteria</taxon>
        <taxon>Vibrionales</taxon>
        <taxon>Vibrionaceae</taxon>
        <taxon>Vibrio</taxon>
    </lineage>
</organism>
<comment type="function">
    <text evidence="1">Catalyzes the transfer of a two-carbon ketol group from a ketose donor to an aldose acceptor, via a covalent intermediate with the cofactor thiamine pyrophosphate.</text>
</comment>
<comment type="catalytic activity">
    <reaction>
        <text>D-sedoheptulose 7-phosphate + D-glyceraldehyde 3-phosphate = aldehydo-D-ribose 5-phosphate + D-xylulose 5-phosphate</text>
        <dbReference type="Rhea" id="RHEA:10508"/>
        <dbReference type="ChEBI" id="CHEBI:57483"/>
        <dbReference type="ChEBI" id="CHEBI:57737"/>
        <dbReference type="ChEBI" id="CHEBI:58273"/>
        <dbReference type="ChEBI" id="CHEBI:59776"/>
        <dbReference type="EC" id="2.2.1.1"/>
    </reaction>
</comment>
<comment type="cofactor">
    <cofactor evidence="1">
        <name>Mg(2+)</name>
        <dbReference type="ChEBI" id="CHEBI:18420"/>
    </cofactor>
    <cofactor evidence="1">
        <name>Ca(2+)</name>
        <dbReference type="ChEBI" id="CHEBI:29108"/>
    </cofactor>
    <cofactor evidence="1">
        <name>Mn(2+)</name>
        <dbReference type="ChEBI" id="CHEBI:29035"/>
    </cofactor>
    <cofactor evidence="1">
        <name>Co(2+)</name>
        <dbReference type="ChEBI" id="CHEBI:48828"/>
    </cofactor>
    <text evidence="1">Binds 1 Mg(2+) ion per subunit. Can also utilize other divalent metal cations, such as Ca(2+), Mn(2+) and Co(2+).</text>
</comment>
<comment type="cofactor">
    <cofactor evidence="1">
        <name>thiamine diphosphate</name>
        <dbReference type="ChEBI" id="CHEBI:58937"/>
    </cofactor>
    <text evidence="1">Binds 1 thiamine pyrophosphate per subunit.</text>
</comment>
<comment type="subunit">
    <text evidence="1">Homodimer.</text>
</comment>
<comment type="similarity">
    <text evidence="2">Belongs to the transketolase family.</text>
</comment>
<comment type="sequence caution" evidence="2">
    <conflict type="erroneous initiation">
        <sequence resource="EMBL-CDS" id="AAF93646"/>
    </conflict>
</comment>
<accession>Q9KUP2</accession>
<gene>
    <name type="primary">tkt1</name>
    <name type="ordered locus">VC_0473</name>
</gene>
<evidence type="ECO:0000250" key="1"/>
<evidence type="ECO:0000305" key="2"/>